<protein>
    <recommendedName>
        <fullName evidence="1">Cytidylate kinase</fullName>
        <shortName evidence="1">CK</shortName>
        <ecNumber evidence="1">2.7.4.25</ecNumber>
    </recommendedName>
    <alternativeName>
        <fullName evidence="1">Cytidine monophosphate kinase</fullName>
        <shortName evidence="1">CMP kinase</shortName>
    </alternativeName>
</protein>
<proteinExistence type="inferred from homology"/>
<name>KCY_SHEHH</name>
<reference key="1">
    <citation type="submission" date="2008-01" db="EMBL/GenBank/DDBJ databases">
        <title>Complete sequence of Shewanella halifaxensis HAW-EB4.</title>
        <authorList>
            <consortium name="US DOE Joint Genome Institute"/>
            <person name="Copeland A."/>
            <person name="Lucas S."/>
            <person name="Lapidus A."/>
            <person name="Glavina del Rio T."/>
            <person name="Dalin E."/>
            <person name="Tice H."/>
            <person name="Bruce D."/>
            <person name="Goodwin L."/>
            <person name="Pitluck S."/>
            <person name="Sims D."/>
            <person name="Brettin T."/>
            <person name="Detter J.C."/>
            <person name="Han C."/>
            <person name="Kuske C.R."/>
            <person name="Schmutz J."/>
            <person name="Larimer F."/>
            <person name="Land M."/>
            <person name="Hauser L."/>
            <person name="Kyrpides N."/>
            <person name="Kim E."/>
            <person name="Zhao J.-S."/>
            <person name="Richardson P."/>
        </authorList>
    </citation>
    <scope>NUCLEOTIDE SEQUENCE [LARGE SCALE GENOMIC DNA]</scope>
    <source>
        <strain>HAW-EB4</strain>
    </source>
</reference>
<keyword id="KW-0067">ATP-binding</keyword>
<keyword id="KW-0963">Cytoplasm</keyword>
<keyword id="KW-0418">Kinase</keyword>
<keyword id="KW-0547">Nucleotide-binding</keyword>
<keyword id="KW-0808">Transferase</keyword>
<dbReference type="EC" id="2.7.4.25" evidence="1"/>
<dbReference type="EMBL" id="CP000931">
    <property type="protein sequence ID" value="ABZ76605.1"/>
    <property type="molecule type" value="Genomic_DNA"/>
</dbReference>
<dbReference type="RefSeq" id="WP_012277135.1">
    <property type="nucleotide sequence ID" value="NC_010334.1"/>
</dbReference>
<dbReference type="SMR" id="B0TT44"/>
<dbReference type="STRING" id="458817.Shal_2044"/>
<dbReference type="KEGG" id="shl:Shal_2044"/>
<dbReference type="eggNOG" id="COG0283">
    <property type="taxonomic scope" value="Bacteria"/>
</dbReference>
<dbReference type="HOGENOM" id="CLU_079959_2_0_6"/>
<dbReference type="OrthoDB" id="9807434at2"/>
<dbReference type="Proteomes" id="UP000001317">
    <property type="component" value="Chromosome"/>
</dbReference>
<dbReference type="GO" id="GO:0005829">
    <property type="term" value="C:cytosol"/>
    <property type="evidence" value="ECO:0007669"/>
    <property type="project" value="TreeGrafter"/>
</dbReference>
<dbReference type="GO" id="GO:0005524">
    <property type="term" value="F:ATP binding"/>
    <property type="evidence" value="ECO:0007669"/>
    <property type="project" value="UniProtKB-UniRule"/>
</dbReference>
<dbReference type="GO" id="GO:0036430">
    <property type="term" value="F:CMP kinase activity"/>
    <property type="evidence" value="ECO:0007669"/>
    <property type="project" value="RHEA"/>
</dbReference>
<dbReference type="GO" id="GO:0036431">
    <property type="term" value="F:dCMP kinase activity"/>
    <property type="evidence" value="ECO:0007669"/>
    <property type="project" value="RHEA"/>
</dbReference>
<dbReference type="GO" id="GO:0015949">
    <property type="term" value="P:nucleobase-containing small molecule interconversion"/>
    <property type="evidence" value="ECO:0007669"/>
    <property type="project" value="TreeGrafter"/>
</dbReference>
<dbReference type="GO" id="GO:0006220">
    <property type="term" value="P:pyrimidine nucleotide metabolic process"/>
    <property type="evidence" value="ECO:0007669"/>
    <property type="project" value="UniProtKB-UniRule"/>
</dbReference>
<dbReference type="CDD" id="cd02020">
    <property type="entry name" value="CMPK"/>
    <property type="match status" value="1"/>
</dbReference>
<dbReference type="FunFam" id="3.40.50.300:FF:000262">
    <property type="entry name" value="Cytidylate kinase"/>
    <property type="match status" value="1"/>
</dbReference>
<dbReference type="Gene3D" id="3.40.50.300">
    <property type="entry name" value="P-loop containing nucleotide triphosphate hydrolases"/>
    <property type="match status" value="1"/>
</dbReference>
<dbReference type="HAMAP" id="MF_00238">
    <property type="entry name" value="Cytidyl_kinase_type1"/>
    <property type="match status" value="1"/>
</dbReference>
<dbReference type="InterPro" id="IPR003136">
    <property type="entry name" value="Cytidylate_kin"/>
</dbReference>
<dbReference type="InterPro" id="IPR011994">
    <property type="entry name" value="Cytidylate_kinase_dom"/>
</dbReference>
<dbReference type="InterPro" id="IPR027417">
    <property type="entry name" value="P-loop_NTPase"/>
</dbReference>
<dbReference type="NCBIfam" id="TIGR00017">
    <property type="entry name" value="cmk"/>
    <property type="match status" value="1"/>
</dbReference>
<dbReference type="PANTHER" id="PTHR21299:SF2">
    <property type="entry name" value="CYTIDYLATE KINASE"/>
    <property type="match status" value="1"/>
</dbReference>
<dbReference type="PANTHER" id="PTHR21299">
    <property type="entry name" value="CYTIDYLATE KINASE/PANTOATE-BETA-ALANINE LIGASE"/>
    <property type="match status" value="1"/>
</dbReference>
<dbReference type="Pfam" id="PF02224">
    <property type="entry name" value="Cytidylate_kin"/>
    <property type="match status" value="1"/>
</dbReference>
<dbReference type="SUPFAM" id="SSF52540">
    <property type="entry name" value="P-loop containing nucleoside triphosphate hydrolases"/>
    <property type="match status" value="1"/>
</dbReference>
<evidence type="ECO:0000255" key="1">
    <source>
        <dbReference type="HAMAP-Rule" id="MF_00238"/>
    </source>
</evidence>
<organism>
    <name type="scientific">Shewanella halifaxensis (strain HAW-EB4)</name>
    <dbReference type="NCBI Taxonomy" id="458817"/>
    <lineage>
        <taxon>Bacteria</taxon>
        <taxon>Pseudomonadati</taxon>
        <taxon>Pseudomonadota</taxon>
        <taxon>Gammaproteobacteria</taxon>
        <taxon>Alteromonadales</taxon>
        <taxon>Shewanellaceae</taxon>
        <taxon>Shewanella</taxon>
    </lineage>
</organism>
<feature type="chain" id="PRO_1000078350" description="Cytidylate kinase">
    <location>
        <begin position="1"/>
        <end position="230"/>
    </location>
</feature>
<feature type="binding site" evidence="1">
    <location>
        <begin position="12"/>
        <end position="20"/>
    </location>
    <ligand>
        <name>ATP</name>
        <dbReference type="ChEBI" id="CHEBI:30616"/>
    </ligand>
</feature>
<accession>B0TT44</accession>
<comment type="catalytic activity">
    <reaction evidence="1">
        <text>CMP + ATP = CDP + ADP</text>
        <dbReference type="Rhea" id="RHEA:11600"/>
        <dbReference type="ChEBI" id="CHEBI:30616"/>
        <dbReference type="ChEBI" id="CHEBI:58069"/>
        <dbReference type="ChEBI" id="CHEBI:60377"/>
        <dbReference type="ChEBI" id="CHEBI:456216"/>
        <dbReference type="EC" id="2.7.4.25"/>
    </reaction>
</comment>
<comment type="catalytic activity">
    <reaction evidence="1">
        <text>dCMP + ATP = dCDP + ADP</text>
        <dbReference type="Rhea" id="RHEA:25094"/>
        <dbReference type="ChEBI" id="CHEBI:30616"/>
        <dbReference type="ChEBI" id="CHEBI:57566"/>
        <dbReference type="ChEBI" id="CHEBI:58593"/>
        <dbReference type="ChEBI" id="CHEBI:456216"/>
        <dbReference type="EC" id="2.7.4.25"/>
    </reaction>
</comment>
<comment type="subcellular location">
    <subcellularLocation>
        <location evidence="1">Cytoplasm</location>
    </subcellularLocation>
</comment>
<comment type="similarity">
    <text evidence="1">Belongs to the cytidylate kinase family. Type 1 subfamily.</text>
</comment>
<gene>
    <name evidence="1" type="primary">cmk</name>
    <name type="ordered locus">Shal_2044</name>
</gene>
<sequence>MSERAPVVTVDGPSGAGKGTISQLLAERLGYKLLDSGAIYRVLALAAIHHNVELDNEESLTLLAAHLDVQFVTGNEGKGIKVVLEGEDVSTTIRSQECSNAASKVAAFPRVREALLRRQRAFAEAPGLIADGRDMGTVVFPATPAKLYLTATAEERAQRRYNQLQDKGFDVNIDQLLSEIKERDDRDMNRSVAPLVPAEDALIIDTTNINIEDVLDLALTHIHQKLQVPA</sequence>